<organism>
    <name type="scientific">Nycticebus coucang</name>
    <name type="common">Slow loris</name>
    <dbReference type="NCBI Taxonomy" id="9470"/>
    <lineage>
        <taxon>Eukaryota</taxon>
        <taxon>Metazoa</taxon>
        <taxon>Chordata</taxon>
        <taxon>Craniata</taxon>
        <taxon>Vertebrata</taxon>
        <taxon>Euteleostomi</taxon>
        <taxon>Mammalia</taxon>
        <taxon>Eutheria</taxon>
        <taxon>Euarchontoglires</taxon>
        <taxon>Primates</taxon>
        <taxon>Strepsirrhini</taxon>
        <taxon>Lorisiformes</taxon>
        <taxon>Lorisidae</taxon>
        <taxon>Nycticebus</taxon>
    </lineage>
</organism>
<evidence type="ECO:0000250" key="1"/>
<evidence type="ECO:0000255" key="2"/>
<evidence type="ECO:0000305" key="3"/>
<sequence length="318" mass="35804">MFMVNLLMLVIPVMLAMAFLTLLERKTLGYMQFRKGPNVVGPNGLLQPFADAMKLFIKEPLQPLTSSTSLYIIAPTLALSIALIMWTPLPIPYPLVNINLGVLFILATSSLAVYSILWSGWASNSKYALIGALRAVAQTISYEVTLAIILLCILLMSGSFTLSTLIKTQEHTWLLLPSWPLAMMWFISTLAETNRAPFDLTEGESELVSGFNVEYAAGPFALFFMAEYTNIIMMNALTATIFMSAIHSMNFPEFFSINFTLKTLLLTTIFLWVRASYPRFRYDQLMHLLWKNFLPLTLAMCMWHTALPIFLANIPPQT</sequence>
<dbReference type="EC" id="7.1.1.2"/>
<dbReference type="EMBL" id="AB011214">
    <property type="protein sequence ID" value="BAA32106.1"/>
    <property type="molecule type" value="Genomic_DNA"/>
</dbReference>
<dbReference type="SMR" id="O78697"/>
<dbReference type="GO" id="GO:0005743">
    <property type="term" value="C:mitochondrial inner membrane"/>
    <property type="evidence" value="ECO:0007669"/>
    <property type="project" value="UniProtKB-SubCell"/>
</dbReference>
<dbReference type="GO" id="GO:0008137">
    <property type="term" value="F:NADH dehydrogenase (ubiquinone) activity"/>
    <property type="evidence" value="ECO:0007669"/>
    <property type="project" value="UniProtKB-EC"/>
</dbReference>
<dbReference type="GO" id="GO:0009060">
    <property type="term" value="P:aerobic respiration"/>
    <property type="evidence" value="ECO:0007669"/>
    <property type="project" value="TreeGrafter"/>
</dbReference>
<dbReference type="HAMAP" id="MF_01350">
    <property type="entry name" value="NDH1_NuoH"/>
    <property type="match status" value="1"/>
</dbReference>
<dbReference type="InterPro" id="IPR001694">
    <property type="entry name" value="NADH_UbQ_OxRdtase_su1/FPO"/>
</dbReference>
<dbReference type="InterPro" id="IPR018086">
    <property type="entry name" value="NADH_UbQ_OxRdtase_su1_CS"/>
</dbReference>
<dbReference type="PANTHER" id="PTHR11432">
    <property type="entry name" value="NADH DEHYDROGENASE SUBUNIT 1"/>
    <property type="match status" value="1"/>
</dbReference>
<dbReference type="PANTHER" id="PTHR11432:SF3">
    <property type="entry name" value="NADH-UBIQUINONE OXIDOREDUCTASE CHAIN 1"/>
    <property type="match status" value="1"/>
</dbReference>
<dbReference type="Pfam" id="PF00146">
    <property type="entry name" value="NADHdh"/>
    <property type="match status" value="1"/>
</dbReference>
<dbReference type="PROSITE" id="PS00667">
    <property type="entry name" value="COMPLEX1_ND1_1"/>
    <property type="match status" value="1"/>
</dbReference>
<dbReference type="PROSITE" id="PS00668">
    <property type="entry name" value="COMPLEX1_ND1_2"/>
    <property type="match status" value="1"/>
</dbReference>
<gene>
    <name type="primary">MT-ND1</name>
    <name type="synonym">MTND1</name>
    <name type="synonym">NADH1</name>
    <name type="synonym">ND1</name>
</gene>
<reference key="1">
    <citation type="journal article" date="1998" name="J. Mol. Evol.">
        <title>Conflict among individual mitochondrial proteins in resolving the phylogeny of eutherian orders.</title>
        <authorList>
            <person name="Cao Y."/>
            <person name="Janke A."/>
            <person name="Waddell P.J."/>
            <person name="Westerman M."/>
            <person name="Takenaka O."/>
            <person name="Murata S."/>
            <person name="Okada N."/>
            <person name="Paeaebo S."/>
            <person name="Hasegawa M."/>
        </authorList>
    </citation>
    <scope>NUCLEOTIDE SEQUENCE [GENOMIC DNA]</scope>
    <source>
        <tissue>Liver</tissue>
    </source>
</reference>
<feature type="chain" id="PRO_0000117438" description="NADH-ubiquinone oxidoreductase chain 1">
    <location>
        <begin position="1"/>
        <end position="318"/>
    </location>
</feature>
<feature type="transmembrane region" description="Helical" evidence="2">
    <location>
        <begin position="2"/>
        <end position="22"/>
    </location>
</feature>
<feature type="transmembrane region" description="Helical" evidence="2">
    <location>
        <begin position="71"/>
        <end position="91"/>
    </location>
</feature>
<feature type="transmembrane region" description="Helical" evidence="2">
    <location>
        <begin position="98"/>
        <end position="118"/>
    </location>
</feature>
<feature type="transmembrane region" description="Helical" evidence="2">
    <location>
        <begin position="146"/>
        <end position="166"/>
    </location>
</feature>
<feature type="transmembrane region" description="Helical" evidence="2">
    <location>
        <begin position="171"/>
        <end position="191"/>
    </location>
</feature>
<feature type="transmembrane region" description="Helical" evidence="2">
    <location>
        <begin position="222"/>
        <end position="242"/>
    </location>
</feature>
<feature type="transmembrane region" description="Helical" evidence="2">
    <location>
        <begin position="253"/>
        <end position="273"/>
    </location>
</feature>
<feature type="transmembrane region" description="Helical" evidence="2">
    <location>
        <begin position="294"/>
        <end position="314"/>
    </location>
</feature>
<comment type="function">
    <text evidence="1">Core subunit of the mitochondrial membrane respiratory chain NADH dehydrogenase (Complex I) that is believed to belong to the minimal assembly required for catalysis. Complex I functions in the transfer of electrons from NADH to the respiratory chain. The immediate electron acceptor for the enzyme is believed to be ubiquinone (By similarity).</text>
</comment>
<comment type="catalytic activity">
    <reaction>
        <text>a ubiquinone + NADH + 5 H(+)(in) = a ubiquinol + NAD(+) + 4 H(+)(out)</text>
        <dbReference type="Rhea" id="RHEA:29091"/>
        <dbReference type="Rhea" id="RHEA-COMP:9565"/>
        <dbReference type="Rhea" id="RHEA-COMP:9566"/>
        <dbReference type="ChEBI" id="CHEBI:15378"/>
        <dbReference type="ChEBI" id="CHEBI:16389"/>
        <dbReference type="ChEBI" id="CHEBI:17976"/>
        <dbReference type="ChEBI" id="CHEBI:57540"/>
        <dbReference type="ChEBI" id="CHEBI:57945"/>
        <dbReference type="EC" id="7.1.1.2"/>
    </reaction>
</comment>
<comment type="subcellular location">
    <subcellularLocation>
        <location evidence="1">Mitochondrion inner membrane</location>
        <topology evidence="1">Multi-pass membrane protein</topology>
    </subcellularLocation>
</comment>
<comment type="similarity">
    <text evidence="3">Belongs to the complex I subunit 1 family.</text>
</comment>
<keyword id="KW-0249">Electron transport</keyword>
<keyword id="KW-0472">Membrane</keyword>
<keyword id="KW-0496">Mitochondrion</keyword>
<keyword id="KW-0999">Mitochondrion inner membrane</keyword>
<keyword id="KW-0520">NAD</keyword>
<keyword id="KW-0679">Respiratory chain</keyword>
<keyword id="KW-1278">Translocase</keyword>
<keyword id="KW-0812">Transmembrane</keyword>
<keyword id="KW-1133">Transmembrane helix</keyword>
<keyword id="KW-0813">Transport</keyword>
<keyword id="KW-0830">Ubiquinone</keyword>
<protein>
    <recommendedName>
        <fullName>NADH-ubiquinone oxidoreductase chain 1</fullName>
        <ecNumber>7.1.1.2</ecNumber>
    </recommendedName>
    <alternativeName>
        <fullName>NADH dehydrogenase subunit 1</fullName>
    </alternativeName>
</protein>
<name>NU1M_NYCCO</name>
<accession>O78697</accession>
<proteinExistence type="inferred from homology"/>
<geneLocation type="mitochondrion"/>